<gene>
    <name evidence="15" type="primary">tyrS</name>
    <name type="ordered locus">b1637</name>
    <name type="ordered locus">JW1629</name>
</gene>
<dbReference type="EC" id="6.1.1.1" evidence="1 3 4 9 10"/>
<dbReference type="EMBL" id="J01719">
    <property type="protein sequence ID" value="AAA24707.1"/>
    <property type="molecule type" value="Genomic_DNA"/>
</dbReference>
<dbReference type="EMBL" id="U00096">
    <property type="protein sequence ID" value="AAC74709.1"/>
    <property type="molecule type" value="Genomic_DNA"/>
</dbReference>
<dbReference type="EMBL" id="AP009048">
    <property type="protein sequence ID" value="BAA15398.2"/>
    <property type="molecule type" value="Genomic_DNA"/>
</dbReference>
<dbReference type="EMBL" id="M92351">
    <property type="protein sequence ID" value="AAA24710.1"/>
    <property type="molecule type" value="Genomic_DNA"/>
</dbReference>
<dbReference type="PIR" id="A01178">
    <property type="entry name" value="SYECYT"/>
</dbReference>
<dbReference type="RefSeq" id="NP_416154.1">
    <property type="nucleotide sequence ID" value="NC_000913.3"/>
</dbReference>
<dbReference type="RefSeq" id="WP_001295400.1">
    <property type="nucleotide sequence ID" value="NZ_STEB01000003.1"/>
</dbReference>
<dbReference type="PDB" id="1VBM">
    <property type="method" value="X-ray"/>
    <property type="resolution" value="2.70 A"/>
    <property type="chains" value="A/B=5-322"/>
</dbReference>
<dbReference type="PDB" id="1VBN">
    <property type="method" value="X-ray"/>
    <property type="resolution" value="2.70 A"/>
    <property type="chains" value="A/B=5-322"/>
</dbReference>
<dbReference type="PDB" id="1WQ3">
    <property type="method" value="X-ray"/>
    <property type="resolution" value="2.00 A"/>
    <property type="chains" value="A=1-322"/>
</dbReference>
<dbReference type="PDB" id="1WQ4">
    <property type="method" value="X-ray"/>
    <property type="resolution" value="2.00 A"/>
    <property type="chains" value="A=2-322"/>
</dbReference>
<dbReference type="PDB" id="1X8X">
    <property type="method" value="X-ray"/>
    <property type="resolution" value="2.00 A"/>
    <property type="chains" value="A=1-322"/>
</dbReference>
<dbReference type="PDB" id="2YXN">
    <property type="method" value="X-ray"/>
    <property type="resolution" value="1.80 A"/>
    <property type="chains" value="A=1-322"/>
</dbReference>
<dbReference type="PDB" id="6HB5">
    <property type="method" value="X-ray"/>
    <property type="resolution" value="1.88 A"/>
    <property type="chains" value="A/B=1-424"/>
</dbReference>
<dbReference type="PDB" id="6HB6">
    <property type="method" value="X-ray"/>
    <property type="resolution" value="1.92 A"/>
    <property type="chains" value="A/B=1-424"/>
</dbReference>
<dbReference type="PDB" id="6HB7">
    <property type="method" value="X-ray"/>
    <property type="resolution" value="1.90 A"/>
    <property type="chains" value="A/B=1-424"/>
</dbReference>
<dbReference type="PDB" id="6I5Y">
    <property type="method" value="X-ray"/>
    <property type="resolution" value="1.90 A"/>
    <property type="chains" value="A/B=1-424"/>
</dbReference>
<dbReference type="PDB" id="6WN2">
    <property type="method" value="X-ray"/>
    <property type="resolution" value="1.78 A"/>
    <property type="chains" value="A/B=1-322"/>
</dbReference>
<dbReference type="PDB" id="7AP3">
    <property type="method" value="X-ray"/>
    <property type="resolution" value="2.00 A"/>
    <property type="chains" value="A/B=1-424"/>
</dbReference>
<dbReference type="PDBsum" id="1VBM"/>
<dbReference type="PDBsum" id="1VBN"/>
<dbReference type="PDBsum" id="1WQ3"/>
<dbReference type="PDBsum" id="1WQ4"/>
<dbReference type="PDBsum" id="1X8X"/>
<dbReference type="PDBsum" id="2YXN"/>
<dbReference type="PDBsum" id="6HB5"/>
<dbReference type="PDBsum" id="6HB6"/>
<dbReference type="PDBsum" id="6HB7"/>
<dbReference type="PDBsum" id="6I5Y"/>
<dbReference type="PDBsum" id="6WN2"/>
<dbReference type="PDBsum" id="7AP3"/>
<dbReference type="SMR" id="P0AGJ9"/>
<dbReference type="BioGRID" id="4263487">
    <property type="interactions" value="50"/>
</dbReference>
<dbReference type="DIP" id="DIP-36227N"/>
<dbReference type="FunCoup" id="P0AGJ9">
    <property type="interactions" value="878"/>
</dbReference>
<dbReference type="IntAct" id="P0AGJ9">
    <property type="interactions" value="8"/>
</dbReference>
<dbReference type="STRING" id="511145.b1637"/>
<dbReference type="BindingDB" id="P0AGJ9"/>
<dbReference type="ChEMBL" id="CHEMBL4295572"/>
<dbReference type="DrugBank" id="DB01758">
    <property type="generic name" value="3-Iodo-Tyrosine"/>
</dbReference>
<dbReference type="DrugBank" id="DB03325">
    <property type="generic name" value="Tyrosyladenylate"/>
</dbReference>
<dbReference type="iPTMnet" id="P0AGJ9"/>
<dbReference type="jPOST" id="P0AGJ9"/>
<dbReference type="PaxDb" id="511145-b1637"/>
<dbReference type="EnsemblBacteria" id="AAC74709">
    <property type="protein sequence ID" value="AAC74709"/>
    <property type="gene ID" value="b1637"/>
</dbReference>
<dbReference type="GeneID" id="93775791"/>
<dbReference type="GeneID" id="948855"/>
<dbReference type="KEGG" id="ecj:JW1629"/>
<dbReference type="KEGG" id="eco:b1637"/>
<dbReference type="KEGG" id="ecoc:C3026_09405"/>
<dbReference type="PATRIC" id="fig|1411691.4.peg.623"/>
<dbReference type="EchoBASE" id="EB1036"/>
<dbReference type="eggNOG" id="COG0162">
    <property type="taxonomic scope" value="Bacteria"/>
</dbReference>
<dbReference type="InParanoid" id="P0AGJ9"/>
<dbReference type="OMA" id="YMMAKDS"/>
<dbReference type="OrthoDB" id="9804243at2"/>
<dbReference type="PhylomeDB" id="P0AGJ9"/>
<dbReference type="BioCyc" id="EcoCyc:TYRS-MONOMER"/>
<dbReference type="BioCyc" id="MetaCyc:TYRS-MONOMER"/>
<dbReference type="BRENDA" id="6.1.1.1">
    <property type="organism ID" value="2026"/>
</dbReference>
<dbReference type="SABIO-RK" id="P0AGJ9"/>
<dbReference type="EvolutionaryTrace" id="P0AGJ9"/>
<dbReference type="PRO" id="PR:P0AGJ9"/>
<dbReference type="Proteomes" id="UP000000625">
    <property type="component" value="Chromosome"/>
</dbReference>
<dbReference type="GO" id="GO:0005829">
    <property type="term" value="C:cytosol"/>
    <property type="evidence" value="ECO:0000314"/>
    <property type="project" value="EcoCyc"/>
</dbReference>
<dbReference type="GO" id="GO:0016020">
    <property type="term" value="C:membrane"/>
    <property type="evidence" value="ECO:0007005"/>
    <property type="project" value="UniProtKB"/>
</dbReference>
<dbReference type="GO" id="GO:0005524">
    <property type="term" value="F:ATP binding"/>
    <property type="evidence" value="ECO:0007669"/>
    <property type="project" value="UniProtKB-UniRule"/>
</dbReference>
<dbReference type="GO" id="GO:0042803">
    <property type="term" value="F:protein homodimerization activity"/>
    <property type="evidence" value="ECO:0000314"/>
    <property type="project" value="EcoCyc"/>
</dbReference>
<dbReference type="GO" id="GO:0003723">
    <property type="term" value="F:RNA binding"/>
    <property type="evidence" value="ECO:0007669"/>
    <property type="project" value="UniProtKB-KW"/>
</dbReference>
<dbReference type="GO" id="GO:0004831">
    <property type="term" value="F:tyrosine-tRNA ligase activity"/>
    <property type="evidence" value="ECO:0000314"/>
    <property type="project" value="EcoCyc"/>
</dbReference>
<dbReference type="GO" id="GO:0043039">
    <property type="term" value="P:tRNA aminoacylation"/>
    <property type="evidence" value="ECO:0000318"/>
    <property type="project" value="GO_Central"/>
</dbReference>
<dbReference type="GO" id="GO:0006437">
    <property type="term" value="P:tyrosyl-tRNA aminoacylation"/>
    <property type="evidence" value="ECO:0000314"/>
    <property type="project" value="EcoCyc"/>
</dbReference>
<dbReference type="CDD" id="cd00165">
    <property type="entry name" value="S4"/>
    <property type="match status" value="1"/>
</dbReference>
<dbReference type="CDD" id="cd00805">
    <property type="entry name" value="TyrRS_core"/>
    <property type="match status" value="1"/>
</dbReference>
<dbReference type="FunFam" id="1.10.240.10:FF:000001">
    <property type="entry name" value="Tyrosine--tRNA ligase"/>
    <property type="match status" value="1"/>
</dbReference>
<dbReference type="FunFam" id="3.10.290.10:FF:000007">
    <property type="entry name" value="Tyrosine--tRNA ligase"/>
    <property type="match status" value="1"/>
</dbReference>
<dbReference type="FunFam" id="3.40.50.620:FF:000008">
    <property type="entry name" value="Tyrosine--tRNA ligase"/>
    <property type="match status" value="1"/>
</dbReference>
<dbReference type="Gene3D" id="3.40.50.620">
    <property type="entry name" value="HUPs"/>
    <property type="match status" value="1"/>
</dbReference>
<dbReference type="Gene3D" id="3.10.290.10">
    <property type="entry name" value="RNA-binding S4 domain"/>
    <property type="match status" value="1"/>
</dbReference>
<dbReference type="Gene3D" id="1.10.240.10">
    <property type="entry name" value="Tyrosyl-Transfer RNA Synthetase"/>
    <property type="match status" value="1"/>
</dbReference>
<dbReference type="HAMAP" id="MF_02006">
    <property type="entry name" value="Tyr_tRNA_synth_type1"/>
    <property type="match status" value="1"/>
</dbReference>
<dbReference type="InterPro" id="IPR001412">
    <property type="entry name" value="aa-tRNA-synth_I_CS"/>
</dbReference>
<dbReference type="InterPro" id="IPR002305">
    <property type="entry name" value="aa-tRNA-synth_Ic"/>
</dbReference>
<dbReference type="InterPro" id="IPR014729">
    <property type="entry name" value="Rossmann-like_a/b/a_fold"/>
</dbReference>
<dbReference type="InterPro" id="IPR002942">
    <property type="entry name" value="S4_RNA-bd"/>
</dbReference>
<dbReference type="InterPro" id="IPR036986">
    <property type="entry name" value="S4_RNA-bd_sf"/>
</dbReference>
<dbReference type="InterPro" id="IPR054608">
    <property type="entry name" value="SYY-like_C"/>
</dbReference>
<dbReference type="InterPro" id="IPR002307">
    <property type="entry name" value="Tyr-tRNA-ligase"/>
</dbReference>
<dbReference type="InterPro" id="IPR024088">
    <property type="entry name" value="Tyr-tRNA-ligase_bac-type"/>
</dbReference>
<dbReference type="InterPro" id="IPR024107">
    <property type="entry name" value="Tyr-tRNA-ligase_bac_1"/>
</dbReference>
<dbReference type="NCBIfam" id="TIGR00234">
    <property type="entry name" value="tyrS"/>
    <property type="match status" value="1"/>
</dbReference>
<dbReference type="PANTHER" id="PTHR11766:SF0">
    <property type="entry name" value="TYROSINE--TRNA LIGASE, MITOCHONDRIAL"/>
    <property type="match status" value="1"/>
</dbReference>
<dbReference type="PANTHER" id="PTHR11766">
    <property type="entry name" value="TYROSYL-TRNA SYNTHETASE"/>
    <property type="match status" value="1"/>
</dbReference>
<dbReference type="Pfam" id="PF22421">
    <property type="entry name" value="SYY_C-terminal"/>
    <property type="match status" value="1"/>
</dbReference>
<dbReference type="Pfam" id="PF00579">
    <property type="entry name" value="tRNA-synt_1b"/>
    <property type="match status" value="1"/>
</dbReference>
<dbReference type="PRINTS" id="PR01040">
    <property type="entry name" value="TRNASYNTHTYR"/>
</dbReference>
<dbReference type="SMART" id="SM00363">
    <property type="entry name" value="S4"/>
    <property type="match status" value="1"/>
</dbReference>
<dbReference type="SUPFAM" id="SSF55174">
    <property type="entry name" value="Alpha-L RNA-binding motif"/>
    <property type="match status" value="1"/>
</dbReference>
<dbReference type="SUPFAM" id="SSF52374">
    <property type="entry name" value="Nucleotidylyl transferase"/>
    <property type="match status" value="1"/>
</dbReference>
<dbReference type="PROSITE" id="PS00178">
    <property type="entry name" value="AA_TRNA_LIGASE_I"/>
    <property type="match status" value="1"/>
</dbReference>
<dbReference type="PROSITE" id="PS50889">
    <property type="entry name" value="S4"/>
    <property type="match status" value="1"/>
</dbReference>
<comment type="function">
    <text evidence="4 9 10">Catalyzes the attachment of L-tyrosine to tRNA(Tyr) in a two-step reaction: tyrosine is first activated by ATP to form Tyr-AMP and then transferred to the acceptor end of tRNA(Tyr) (PubMed:4292198, PubMed:4579631). Can also mischarge tRNA(Tyr) with D-tyrosine, leading to the formation of D-tyrosyl-tRNA(Tyr), which can be hydrolyzed by the D-aminoacyl-tRNA deacylase (PubMed:4292198). In vitro, can also use the non-natural amino acid azatyrosine (PubMed:11006270).</text>
</comment>
<comment type="catalytic activity">
    <reaction evidence="1 3 4 9 10">
        <text>tRNA(Tyr) + L-tyrosine + ATP = L-tyrosyl-tRNA(Tyr) + AMP + diphosphate + H(+)</text>
        <dbReference type="Rhea" id="RHEA:10220"/>
        <dbReference type="Rhea" id="RHEA-COMP:9706"/>
        <dbReference type="Rhea" id="RHEA-COMP:9707"/>
        <dbReference type="ChEBI" id="CHEBI:15378"/>
        <dbReference type="ChEBI" id="CHEBI:30616"/>
        <dbReference type="ChEBI" id="CHEBI:33019"/>
        <dbReference type="ChEBI" id="CHEBI:58315"/>
        <dbReference type="ChEBI" id="CHEBI:78442"/>
        <dbReference type="ChEBI" id="CHEBI:78536"/>
        <dbReference type="ChEBI" id="CHEBI:456215"/>
        <dbReference type="EC" id="6.1.1.1"/>
    </reaction>
</comment>
<comment type="catalytic activity">
    <reaction evidence="9">
        <text>D-tyrosine + tRNA(Tyr) + ATP = D-tyrosyl-tRNA(Tyr) + AMP + diphosphate + H(+)</text>
        <dbReference type="Rhea" id="RHEA:57448"/>
        <dbReference type="Rhea" id="RHEA-COMP:9707"/>
        <dbReference type="Rhea" id="RHEA-COMP:9872"/>
        <dbReference type="ChEBI" id="CHEBI:15378"/>
        <dbReference type="ChEBI" id="CHEBI:30616"/>
        <dbReference type="ChEBI" id="CHEBI:33019"/>
        <dbReference type="ChEBI" id="CHEBI:58570"/>
        <dbReference type="ChEBI" id="CHEBI:78442"/>
        <dbReference type="ChEBI" id="CHEBI:78723"/>
        <dbReference type="ChEBI" id="CHEBI:456215"/>
    </reaction>
</comment>
<comment type="activity regulation">
    <text evidence="3 8 9 10">Magnesium is essential for activity (PubMed:4579631). Inhibited by chloride and sulfate in the presence of 1 mM free Mg(2+). When the Mg(2+) concentration increases to 10 mM there is almost no chloride inhibition any more. Inhibited by diphosphate and AMP. Chloride strengthens the diphosphate inhibition and weakens the AMP inhibition. Chloride weakens the binding of Mg(2+) to the RNA and thereby the interaction between the enzyme and the RNA (PubMed:10572925). Acetylation at certain lysine residues could significantly impair activity (PubMed:28741290). D-tyrosine is a competitive inhibitor of L-tyrosine for the formation of tyrosyl-tRNA(Tyr) (PubMed:4292198).</text>
</comment>
<comment type="biophysicochemical properties">
    <kinetics>
        <KM evidence="9">0.027 mM for L-tyrosine</KM>
        <KM evidence="4">0.0033 mM for L-tyrosine</KM>
        <KM evidence="9">0.015 mM for D-tyrosine</KM>
        <KM evidence="4">0.0177 mM for azatyrosine</KM>
        <KM evidence="3">22 nM for tRNA(Tyr) (in the absence of KCl)</KM>
        <KM evidence="3">37 nM for tRNA(Tyr) (in the presence of 50 mM KCl)</KM>
        <KM evidence="3">93 nM for tRNA(Tyr) (in the presence of 100 mM KCl)</KM>
        <KM evidence="3">240 nM for tRNA(Tyr) (in the presence of 150 mM KCl)</KM>
        <Vmax evidence="9">2.6 umol/min/mg enzyme for L-tyrosine</Vmax>
        <Vmax evidence="9">0.11 umol/min/mg enzyme for D-tyrosine</Vmax>
        <text evidence="4">kcat is 0.74 sec(-1) with L-tyrosine as substrate. kcat is 0.11 sec(-1) with azatyrosine as substrate.</text>
    </kinetics>
</comment>
<comment type="subunit">
    <text evidence="5 6 10 11">Homodimer (PubMed:15663931, PubMed:15671170, PubMed:4579631, PubMed:6754952). Binds one molecule of tRNA(Tyr) per homodimer (PubMed:6754952).</text>
</comment>
<comment type="subcellular location">
    <subcellularLocation>
        <location evidence="1 16">Cytoplasm</location>
    </subcellularLocation>
</comment>
<comment type="PTM">
    <text evidence="7 8">Acetylated at Lys-144 (PubMed:18723842, PubMed:28741290). Acetylation at Lys-144 leads to slightly decreased activity (PubMed:28741290). In vitro, in the presence of acetyl-phosphate, can also be acetylated at Lys-67, Lys-85, Lys-90, Lys-230, Lys-235, Lys-238, Lys-321 and Lys-377. Acetylation at Lys-85, Lys-235 or Lys-238 causes dramatic decrease in activity (PubMed:28741290).</text>
</comment>
<comment type="biotechnology">
    <text evidence="4">Utilization for in vivo protein biosynthesis of mutants that charge azatyrosine efficiently to tRNA may lead to efficient production of azatyrosine-containing alloproteins, which have immense potential in biotechnology and medicine.</text>
</comment>
<comment type="similarity">
    <text evidence="1 16">Belongs to the class-I aminoacyl-tRNA synthetase family. TyrS type 1 subfamily.</text>
</comment>
<proteinExistence type="evidence at protein level"/>
<name>SYY_ECOLI</name>
<sequence length="424" mass="47527">MASSNLIKQLQERGLVAQVTDEEALAERLAQGPIALYCGFDPTADSLHLGHLVPLLCLKRFQQAGHKPVALVGGATGLIGDPSFKAAERKLNTEETVQEWVDKIRKQVAPFLDFDCGENSAIAANNYDWFGNMNVLTFLRDIGKHFSVNQMINKEAVKQRLNREDQGISFTEFSYNLLQGYDFACLNKQYGVVLQIGGSDQWGNITSGIDLTRRLHQNQVFGLTVPLITKADGTKFGKTEGGAVWLDPKKTSPYKFYQFWINTADADVYRFLKFFTFMSIEEINALEEEDKNSGKAPRAQYVLAEQVTRLVHGEEGLQAAKRITECLFSGSLSALSEADFEQLAQDGVPMVEMEKGADLMQALVDSELQPSRGQARKTIASNAITINGEKQSDPEYFFKEEDRLFGRFTLLRRGKKNYCLICWK</sequence>
<feature type="initiator methionine" description="Removed" evidence="12">
    <location>
        <position position="1"/>
    </location>
</feature>
<feature type="chain" id="PRO_0000055652" description="Tyrosine--tRNA ligase">
    <location>
        <begin position="2"/>
        <end position="424"/>
    </location>
</feature>
<feature type="domain" description="S4 RNA-binding" evidence="2">
    <location>
        <begin position="357"/>
        <end position="414"/>
    </location>
</feature>
<feature type="short sequence motif" description="'HIGH' region" evidence="1">
    <location>
        <begin position="42"/>
        <end position="51"/>
    </location>
</feature>
<feature type="short sequence motif" description="'KMSKS' region" evidence="1">
    <location>
        <begin position="235"/>
        <end position="239"/>
    </location>
</feature>
<feature type="binding site" evidence="1 5 17">
    <location>
        <position position="37"/>
    </location>
    <ligand>
        <name>L-tyrosine</name>
        <dbReference type="ChEBI" id="CHEBI:58315"/>
    </ligand>
</feature>
<feature type="binding site" evidence="1 5 6 18">
    <location>
        <position position="175"/>
    </location>
    <ligand>
        <name>L-tyrosine</name>
        <dbReference type="ChEBI" id="CHEBI:58315"/>
    </ligand>
</feature>
<feature type="binding site" evidence="1 5 6 18">
    <location>
        <position position="179"/>
    </location>
    <ligand>
        <name>L-tyrosine</name>
        <dbReference type="ChEBI" id="CHEBI:58315"/>
    </ligand>
</feature>
<feature type="binding site" evidence="1">
    <location>
        <position position="238"/>
    </location>
    <ligand>
        <name>ATP</name>
        <dbReference type="ChEBI" id="CHEBI:30616"/>
    </ligand>
</feature>
<feature type="site" description="Cross-linked with tRNA by periodate oxidation">
    <location>
        <position position="231"/>
    </location>
</feature>
<feature type="site" description="Cross-linked with tRNA by periodate oxidation; predominant">
    <location>
        <position position="235"/>
    </location>
</feature>
<feature type="site" description="Cross-linked with tRNA by periodate oxidation">
    <location>
        <position position="238"/>
    </location>
</feature>
<feature type="modified residue" description="N6-acetyllysine" evidence="7">
    <location>
        <position position="144"/>
    </location>
</feature>
<feature type="mutagenesis site" description="Confers specificity for the non-natural amino acid 3-iodo-tyrosine; when associated with C-195." evidence="6">
    <original>Y</original>
    <variation>V</variation>
    <location>
        <position position="37"/>
    </location>
</feature>
<feature type="mutagenesis site" description="Utilizes the non-natural amino acid azatyrosine more efficiently than tyrosine. Strong decrease in affinity for tyrosine and small increase in affinity for azatyrosine. Temperature-sensitive." evidence="4">
    <original>F</original>
    <variation>S</variation>
    <location>
        <position position="130"/>
    </location>
</feature>
<feature type="mutagenesis site" description="Confers specificity for the non-natural amino acid 3-iodo-tyrosine; when associated with V-37." evidence="6">
    <original>Q</original>
    <variation>C</variation>
    <location>
        <position position="195"/>
    </location>
</feature>
<feature type="helix" evidence="28">
    <location>
        <begin position="6"/>
        <end position="12"/>
    </location>
</feature>
<feature type="strand" evidence="28">
    <location>
        <begin position="17"/>
        <end position="21"/>
    </location>
</feature>
<feature type="helix" evidence="28">
    <location>
        <begin position="22"/>
        <end position="31"/>
    </location>
</feature>
<feature type="strand" evidence="28">
    <location>
        <begin position="35"/>
        <end position="40"/>
    </location>
</feature>
<feature type="strand" evidence="28">
    <location>
        <begin position="43"/>
        <end position="46"/>
    </location>
</feature>
<feature type="helix" evidence="28">
    <location>
        <begin position="49"/>
        <end position="51"/>
    </location>
</feature>
<feature type="helix" evidence="28">
    <location>
        <begin position="52"/>
        <end position="63"/>
    </location>
</feature>
<feature type="strand" evidence="28">
    <location>
        <begin position="67"/>
        <end position="72"/>
    </location>
</feature>
<feature type="helix" evidence="28">
    <location>
        <begin position="76"/>
        <end position="78"/>
    </location>
</feature>
<feature type="helix" evidence="28">
    <location>
        <begin position="94"/>
        <end position="108"/>
    </location>
</feature>
<feature type="helix" evidence="28">
    <location>
        <begin position="109"/>
        <end position="111"/>
    </location>
</feature>
<feature type="strand" evidence="26">
    <location>
        <begin position="114"/>
        <end position="116"/>
    </location>
</feature>
<feature type="helix" evidence="28">
    <location>
        <begin position="117"/>
        <end position="119"/>
    </location>
</feature>
<feature type="strand" evidence="28">
    <location>
        <begin position="122"/>
        <end position="125"/>
    </location>
</feature>
<feature type="helix" evidence="28">
    <location>
        <begin position="127"/>
        <end position="130"/>
    </location>
</feature>
<feature type="helix" evidence="28">
    <location>
        <begin position="135"/>
        <end position="141"/>
    </location>
</feature>
<feature type="helix" evidence="28">
    <location>
        <begin position="143"/>
        <end position="145"/>
    </location>
</feature>
<feature type="helix" evidence="28">
    <location>
        <begin position="148"/>
        <end position="151"/>
    </location>
</feature>
<feature type="helix" evidence="28">
    <location>
        <begin position="155"/>
        <end position="158"/>
    </location>
</feature>
<feature type="helix" evidence="28">
    <location>
        <begin position="159"/>
        <end position="161"/>
    </location>
</feature>
<feature type="helix" evidence="28">
    <location>
        <begin position="164"/>
        <end position="166"/>
    </location>
</feature>
<feature type="helix" evidence="28">
    <location>
        <begin position="170"/>
        <end position="173"/>
    </location>
</feature>
<feature type="helix" evidence="28">
    <location>
        <begin position="175"/>
        <end position="190"/>
    </location>
</feature>
<feature type="strand" evidence="28">
    <location>
        <begin position="192"/>
        <end position="198"/>
    </location>
</feature>
<feature type="helix" evidence="28">
    <location>
        <begin position="199"/>
        <end position="201"/>
    </location>
</feature>
<feature type="helix" evidence="28">
    <location>
        <begin position="202"/>
        <end position="216"/>
    </location>
</feature>
<feature type="strand" evidence="28">
    <location>
        <begin position="221"/>
        <end position="225"/>
    </location>
</feature>
<feature type="strand" evidence="25">
    <location>
        <begin position="240"/>
        <end position="242"/>
    </location>
</feature>
<feature type="strand" evidence="28">
    <location>
        <begin position="245"/>
        <end position="247"/>
    </location>
</feature>
<feature type="turn" evidence="28">
    <location>
        <begin position="248"/>
        <end position="250"/>
    </location>
</feature>
<feature type="helix" evidence="28">
    <location>
        <begin position="253"/>
        <end position="261"/>
    </location>
</feature>
<feature type="helix" evidence="28">
    <location>
        <begin position="265"/>
        <end position="275"/>
    </location>
</feature>
<feature type="helix" evidence="28">
    <location>
        <begin position="280"/>
        <end position="291"/>
    </location>
</feature>
<feature type="strand" evidence="28">
    <location>
        <begin position="292"/>
        <end position="295"/>
    </location>
</feature>
<feature type="helix" evidence="28">
    <location>
        <begin position="299"/>
        <end position="320"/>
    </location>
</feature>
<feature type="helix" evidence="29">
    <location>
        <begin position="332"/>
        <end position="334"/>
    </location>
</feature>
<feature type="helix" evidence="27">
    <location>
        <begin position="337"/>
        <end position="345"/>
    </location>
</feature>
<feature type="strand" evidence="27">
    <location>
        <begin position="350"/>
        <end position="353"/>
    </location>
</feature>
<feature type="helix" evidence="27">
    <location>
        <begin position="359"/>
        <end position="365"/>
    </location>
</feature>
<feature type="strand" evidence="27">
    <location>
        <begin position="368"/>
        <end position="370"/>
    </location>
</feature>
<feature type="helix" evidence="27">
    <location>
        <begin position="372"/>
        <end position="380"/>
    </location>
</feature>
<feature type="strand" evidence="27">
    <location>
        <begin position="384"/>
        <end position="386"/>
    </location>
</feature>
<feature type="helix" evidence="27">
    <location>
        <begin position="400"/>
        <end position="402"/>
    </location>
</feature>
<feature type="turn" evidence="27">
    <location>
        <begin position="405"/>
        <end position="407"/>
    </location>
</feature>
<feature type="strand" evidence="27">
    <location>
        <begin position="408"/>
        <end position="413"/>
    </location>
</feature>
<feature type="turn" evidence="27">
    <location>
        <begin position="414"/>
        <end position="416"/>
    </location>
</feature>
<feature type="strand" evidence="27">
    <location>
        <begin position="417"/>
        <end position="423"/>
    </location>
</feature>
<organism>
    <name type="scientific">Escherichia coli (strain K12)</name>
    <dbReference type="NCBI Taxonomy" id="83333"/>
    <lineage>
        <taxon>Bacteria</taxon>
        <taxon>Pseudomonadati</taxon>
        <taxon>Pseudomonadota</taxon>
        <taxon>Gammaproteobacteria</taxon>
        <taxon>Enterobacterales</taxon>
        <taxon>Enterobacteriaceae</taxon>
        <taxon>Escherichia</taxon>
    </lineage>
</organism>
<accession>P0AGJ9</accession>
<accession>P00951</accession>
<evidence type="ECO:0000255" key="1">
    <source>
        <dbReference type="HAMAP-Rule" id="MF_02006"/>
    </source>
</evidence>
<evidence type="ECO:0000255" key="2">
    <source>
        <dbReference type="PROSITE-ProRule" id="PRU00182"/>
    </source>
</evidence>
<evidence type="ECO:0000269" key="3">
    <source>
    </source>
</evidence>
<evidence type="ECO:0000269" key="4">
    <source>
    </source>
</evidence>
<evidence type="ECO:0000269" key="5">
    <source>
    </source>
</evidence>
<evidence type="ECO:0000269" key="6">
    <source>
    </source>
</evidence>
<evidence type="ECO:0000269" key="7">
    <source>
    </source>
</evidence>
<evidence type="ECO:0000269" key="8">
    <source>
    </source>
</evidence>
<evidence type="ECO:0000269" key="9">
    <source>
    </source>
</evidence>
<evidence type="ECO:0000269" key="10">
    <source>
    </source>
</evidence>
<evidence type="ECO:0000269" key="11">
    <source>
    </source>
</evidence>
<evidence type="ECO:0000269" key="12">
    <source>
    </source>
</evidence>
<evidence type="ECO:0000303" key="13">
    <source>
    </source>
</evidence>
<evidence type="ECO:0000303" key="14">
    <source>
    </source>
</evidence>
<evidence type="ECO:0000303" key="15">
    <source>
    </source>
</evidence>
<evidence type="ECO:0000305" key="16"/>
<evidence type="ECO:0000305" key="17">
    <source>
    </source>
</evidence>
<evidence type="ECO:0000305" key="18">
    <source>
    </source>
</evidence>
<evidence type="ECO:0007744" key="19">
    <source>
        <dbReference type="PDB" id="1VBM"/>
    </source>
</evidence>
<evidence type="ECO:0007744" key="20">
    <source>
        <dbReference type="PDB" id="1VBN"/>
    </source>
</evidence>
<evidence type="ECO:0007744" key="21">
    <source>
        <dbReference type="PDB" id="1WQ3"/>
    </source>
</evidence>
<evidence type="ECO:0007744" key="22">
    <source>
        <dbReference type="PDB" id="1WQ4"/>
    </source>
</evidence>
<evidence type="ECO:0007744" key="23">
    <source>
        <dbReference type="PDB" id="1X8X"/>
    </source>
</evidence>
<evidence type="ECO:0007744" key="24">
    <source>
        <dbReference type="PDB" id="2YXN"/>
    </source>
</evidence>
<evidence type="ECO:0007829" key="25">
    <source>
        <dbReference type="PDB" id="1VBM"/>
    </source>
</evidence>
<evidence type="ECO:0007829" key="26">
    <source>
        <dbReference type="PDB" id="2YXN"/>
    </source>
</evidence>
<evidence type="ECO:0007829" key="27">
    <source>
        <dbReference type="PDB" id="6HB5"/>
    </source>
</evidence>
<evidence type="ECO:0007829" key="28">
    <source>
        <dbReference type="PDB" id="6WN2"/>
    </source>
</evidence>
<evidence type="ECO:0007829" key="29">
    <source>
        <dbReference type="PDB" id="7AP3"/>
    </source>
</evidence>
<reference key="1">
    <citation type="journal article" date="1982" name="FEBS Lett.">
        <title>The tyrosyl-tRNA synthetase from Escherichia coli. Complete nucleotide sequence of the structural gene.</title>
        <authorList>
            <person name="Barker D.G."/>
            <person name="Bruton C.J."/>
            <person name="Winter G."/>
        </authorList>
    </citation>
    <scope>NUCLEOTIDE SEQUENCE [GENOMIC DNA]</scope>
    <scope>PARTIAL PROTEIN SEQUENCE</scope>
    <source>
        <strain>K12</strain>
    </source>
</reference>
<reference key="2">
    <citation type="journal article" date="1996" name="DNA Res.">
        <title>A 570-kb DNA sequence of the Escherichia coli K-12 genome corresponding to the 28.0-40.1 min region on the linkage map.</title>
        <authorList>
            <person name="Aiba H."/>
            <person name="Baba T."/>
            <person name="Fujita K."/>
            <person name="Hayashi K."/>
            <person name="Inada T."/>
            <person name="Isono K."/>
            <person name="Itoh T."/>
            <person name="Kasai H."/>
            <person name="Kashimoto K."/>
            <person name="Kimura S."/>
            <person name="Kitakawa M."/>
            <person name="Kitagawa M."/>
            <person name="Makino K."/>
            <person name="Miki T."/>
            <person name="Mizobuchi K."/>
            <person name="Mori H."/>
            <person name="Mori T."/>
            <person name="Motomura K."/>
            <person name="Nakade S."/>
            <person name="Nakamura Y."/>
            <person name="Nashimoto H."/>
            <person name="Nishio Y."/>
            <person name="Oshima T."/>
            <person name="Saito N."/>
            <person name="Sampei G."/>
            <person name="Seki Y."/>
            <person name="Sivasundaram S."/>
            <person name="Tagami H."/>
            <person name="Takeda J."/>
            <person name="Takemoto K."/>
            <person name="Takeuchi Y."/>
            <person name="Wada C."/>
            <person name="Yamamoto Y."/>
            <person name="Horiuchi T."/>
        </authorList>
    </citation>
    <scope>NUCLEOTIDE SEQUENCE [LARGE SCALE GENOMIC DNA]</scope>
    <source>
        <strain>K12 / W3110 / ATCC 27325 / DSM 5911</strain>
    </source>
</reference>
<reference key="3">
    <citation type="journal article" date="1997" name="Science">
        <title>The complete genome sequence of Escherichia coli K-12.</title>
        <authorList>
            <person name="Blattner F.R."/>
            <person name="Plunkett G. III"/>
            <person name="Bloch C.A."/>
            <person name="Perna N.T."/>
            <person name="Burland V."/>
            <person name="Riley M."/>
            <person name="Collado-Vides J."/>
            <person name="Glasner J.D."/>
            <person name="Rode C.K."/>
            <person name="Mayhew G.F."/>
            <person name="Gregor J."/>
            <person name="Davis N.W."/>
            <person name="Kirkpatrick H.A."/>
            <person name="Goeden M.A."/>
            <person name="Rose D.J."/>
            <person name="Mau B."/>
            <person name="Shao Y."/>
        </authorList>
    </citation>
    <scope>NUCLEOTIDE SEQUENCE [LARGE SCALE GENOMIC DNA]</scope>
    <source>
        <strain>K12 / MG1655 / ATCC 47076</strain>
    </source>
</reference>
<reference key="4">
    <citation type="journal article" date="2006" name="Mol. Syst. Biol.">
        <title>Highly accurate genome sequences of Escherichia coli K-12 strains MG1655 and W3110.</title>
        <authorList>
            <person name="Hayashi K."/>
            <person name="Morooka N."/>
            <person name="Yamamoto Y."/>
            <person name="Fujita K."/>
            <person name="Isono K."/>
            <person name="Choi S."/>
            <person name="Ohtsubo E."/>
            <person name="Baba T."/>
            <person name="Wanner B.L."/>
            <person name="Mori H."/>
            <person name="Horiuchi T."/>
        </authorList>
    </citation>
    <scope>NUCLEOTIDE SEQUENCE [LARGE SCALE GENOMIC DNA]</scope>
    <source>
        <strain>K12 / W3110 / ATCC 27325 / DSM 5911</strain>
    </source>
</reference>
<reference key="5">
    <citation type="journal article" date="1992" name="J. Bacteriol.">
        <title>Characterization of the complex pdxH-tyrS operon of Escherichia coli K-12 and pleiotropic phenotypes caused by pdxH insertion mutations.</title>
        <authorList>
            <person name="Lam H.-M."/>
            <person name="Winkler M.E."/>
        </authorList>
    </citation>
    <scope>NUCLEOTIDE SEQUENCE [GENOMIC DNA] OF 1-16</scope>
    <source>
        <strain>K12</strain>
    </source>
</reference>
<reference key="6">
    <citation type="journal article" date="1967" name="J. Mol. Biol.">
        <title>D-tyrosyl RNA: formation, hydrolysis and utilization for protein synthesis.</title>
        <authorList>
            <person name="Calendar R."/>
            <person name="Berg P."/>
        </authorList>
    </citation>
    <scope>FUNCTION</scope>
    <scope>CATALYTIC ACTIVITY</scope>
    <scope>ACTIVITY REGULATION</scope>
    <scope>BIOPHYSICOCHEMICAL PROPERTIES</scope>
    <scope>SUBSTRATE SPECIFICITY</scope>
    <source>
        <strain>B</strain>
    </source>
</reference>
<reference key="7">
    <citation type="journal article" date="1973" name="Biochim. Biophys. Acta">
        <title>Studies on the interaction of tyrosyl-tRNA synthetase from Escherichia coli K12 with tyrosine and with tyrosyl-AMP.</title>
        <authorList>
            <person name="Krajewska-Grynkiewicz K."/>
            <person name="Buonocore V."/>
            <person name="Schlesinger S."/>
        </authorList>
    </citation>
    <scope>FUNCTION</scope>
    <scope>CATALYTIC ACTIVITY</scope>
    <scope>ACTIVITY REGULATION</scope>
    <scope>SUBUNIT</scope>
</reference>
<reference key="8">
    <citation type="journal article" date="1982" name="J. Mol. Biol.">
        <title>Neutron scattering studies of escherichia coli tyrosyl-trna synthetase and of its interaction with trna tyr.</title>
        <authorList>
            <person name="Dessen P."/>
            <person name="Zaccai G."/>
            <person name="Blanquet S."/>
        </authorList>
    </citation>
    <scope>SUBUNIT</scope>
</reference>
<reference key="9">
    <citation type="journal article" date="1997" name="Electrophoresis">
        <title>Escherichia coli proteome analysis using the gene-protein database.</title>
        <authorList>
            <person name="VanBogelen R.A."/>
            <person name="Abshire K.Z."/>
            <person name="Moldover B."/>
            <person name="Olson E.R."/>
            <person name="Neidhardt F.C."/>
        </authorList>
    </citation>
    <scope>IDENTIFICATION BY 2D-GEL</scope>
</reference>
<reference key="10">
    <citation type="journal article" date="1999" name="Biochim. Biophys. Acta">
        <title>Chloride affects the interaction between tyrosyl-tRNA synthetase and tRNA.</title>
        <authorList>
            <person name="Airas R.K."/>
        </authorList>
    </citation>
    <scope>CATALYTIC ACTIVITY</scope>
    <scope>ACTIVITY REGULATION</scope>
    <scope>BIOPHYSICOCHEMICAL PROPERTIES</scope>
</reference>
<reference key="11">
    <citation type="journal article" date="2000" name="J. Biol. Chem.">
        <title>A mutant Escherichia coli tyrosyl-tRNA synthetase utilizes the unnatural amino acid azatyrosine more efficiently than tyrosine.</title>
        <authorList>
            <person name="Hamano-Takaku F."/>
            <person name="Iwama T."/>
            <person name="Saito-Yano S."/>
            <person name="Takaku K."/>
            <person name="Monden Y."/>
            <person name="Kitabatake M."/>
            <person name="Soll D."/>
            <person name="Nishimura S."/>
        </authorList>
    </citation>
    <scope>FUNCTION</scope>
    <scope>CATALYTIC ACTIVITY</scope>
    <scope>BIOPHYSICOCHEMICAL PROPERTIES</scope>
    <scope>BIOTECHNOLOGY</scope>
    <scope>MUTAGENESIS OF PHE-130</scope>
</reference>
<reference key="12">
    <citation type="journal article" date="2009" name="Mol. Cell. Proteomics">
        <title>Lysine acetylation is a highly abundant and evolutionarily conserved modification in Escherichia coli.</title>
        <authorList>
            <person name="Zhang J."/>
            <person name="Sprung R."/>
            <person name="Pei J."/>
            <person name="Tan X."/>
            <person name="Kim S."/>
            <person name="Zhu H."/>
            <person name="Liu C.F."/>
            <person name="Grishin N.V."/>
            <person name="Zhao Y."/>
        </authorList>
    </citation>
    <scope>ACETYLATION [LARGE SCALE ANALYSIS] AT LYS-144</scope>
    <scope>IDENTIFICATION BY MASS SPECTROMETRY</scope>
    <source>
        <strain>K12 / JW1106</strain>
        <strain>K12 / MG1655 / ATCC 47076</strain>
    </source>
</reference>
<reference key="13">
    <citation type="journal article" date="2017" name="ChemBioChem">
        <title>Biochemical characterization of the lysine acetylation of tyrosyl-tRNA synthetase in Escherichia coli.</title>
        <authorList>
            <person name="Venkat S."/>
            <person name="Gregory C."/>
            <person name="Gan Q."/>
            <person name="Fan C."/>
        </authorList>
    </citation>
    <scope>ACETYLATION</scope>
    <scope>ACTIVITY REGULATION</scope>
</reference>
<reference evidence="19 23" key="14">
    <citation type="journal article" date="2005" name="J. Mol. Biol.">
        <title>Structural snapshots of the KMSKS loop rearrangement for amino acid activation by bacterial tyrosyl-tRNA synthetase.</title>
        <authorList>
            <person name="Kobayashi T."/>
            <person name="Takimura T."/>
            <person name="Sekine R."/>
            <person name="Vincent K."/>
            <person name="Kamata K."/>
            <person name="Sakamoto K."/>
            <person name="Nishimura S."/>
            <person name="Yokoyama S."/>
        </authorList>
    </citation>
    <scope>X-RAY CRYSTALLOGRAPHY (2.0 ANGSTROMS) OF 5-322 IN COMPLEX WITH TYROSINE AND TYR-AMP ANALOG</scope>
    <scope>SUBUNIT</scope>
</reference>
<reference evidence="20 21 22" key="15">
    <citation type="journal article" date="2005" name="Proc. Natl. Acad. Sci. U.S.A.">
        <title>Structural basis of nonnatural amino acid recognition by an engineered aminoacyl-tRNA synthetase for genetic code expansion.</title>
        <authorList>
            <person name="Kobayashi T."/>
            <person name="Sakamoto K."/>
            <person name="Takimura T."/>
            <person name="Sekine R."/>
            <person name="Kelly V.P."/>
            <person name="Kamata K."/>
            <person name="Nishimura S."/>
            <person name="Yokoyama S."/>
        </authorList>
    </citation>
    <scope>X-RAY CRYSTALLOGRAPHY (2.0 ANGSTROMS) OF 1-322 OF MUTANT VAL-37/CYS-195 IN COMPLEX WITH SUBSTRATE</scope>
    <scope>SUBUNIT</scope>
</reference>
<reference evidence="24" key="16">
    <citation type="journal article" date="2010" name="Nucleic Acids Res.">
        <title>Functional replacement of the endogenous tyrosyl-tRNA synthetase-tRNATyr pair by the archaeal tyrosine pair in Escherichia coli for genetic code expansion.</title>
        <authorList>
            <person name="Iraha F."/>
            <person name="Oki K."/>
            <person name="Kobayashi T."/>
            <person name="Ohno S."/>
            <person name="Yokogawa T."/>
            <person name="Nishikawa K."/>
            <person name="Yokoyama S."/>
            <person name="Sakamoto K."/>
        </authorList>
    </citation>
    <scope>X-RAY CRYSTALLOGRAPHY (1.80 ANGSTROMS) OF 1-322 IN COMPLEX WITH 3-AZIDO-L-TYROSINE</scope>
</reference>
<protein>
    <recommendedName>
        <fullName evidence="1 16">Tyrosine--tRNA ligase</fullName>
        <ecNumber evidence="1 3 4 9 10">6.1.1.1</ecNumber>
    </recommendedName>
    <alternativeName>
        <fullName evidence="1 14">Tyrosyl-tRNA synthetase</fullName>
        <shortName evidence="1 13">TyrRS</shortName>
    </alternativeName>
</protein>
<keyword id="KW-0002">3D-structure</keyword>
<keyword id="KW-0007">Acetylation</keyword>
<keyword id="KW-0030">Aminoacyl-tRNA synthetase</keyword>
<keyword id="KW-0067">ATP-binding</keyword>
<keyword id="KW-0963">Cytoplasm</keyword>
<keyword id="KW-0903">Direct protein sequencing</keyword>
<keyword id="KW-0436">Ligase</keyword>
<keyword id="KW-0547">Nucleotide-binding</keyword>
<keyword id="KW-0648">Protein biosynthesis</keyword>
<keyword id="KW-1185">Reference proteome</keyword>
<keyword id="KW-0694">RNA-binding</keyword>